<feature type="chain" id="PRO_1000023842" description="Hydrogenase maturation factor HypA">
    <location>
        <begin position="1"/>
        <end position="124"/>
    </location>
</feature>
<feature type="binding site" evidence="1">
    <location>
        <position position="2"/>
    </location>
    <ligand>
        <name>Ni(2+)</name>
        <dbReference type="ChEBI" id="CHEBI:49786"/>
    </ligand>
</feature>
<feature type="binding site" evidence="1">
    <location>
        <position position="78"/>
    </location>
    <ligand>
        <name>Zn(2+)</name>
        <dbReference type="ChEBI" id="CHEBI:29105"/>
    </ligand>
</feature>
<feature type="binding site" evidence="1">
    <location>
        <position position="81"/>
    </location>
    <ligand>
        <name>Zn(2+)</name>
        <dbReference type="ChEBI" id="CHEBI:29105"/>
    </ligand>
</feature>
<feature type="binding site" evidence="1">
    <location>
        <position position="97"/>
    </location>
    <ligand>
        <name>Zn(2+)</name>
        <dbReference type="ChEBI" id="CHEBI:29105"/>
    </ligand>
</feature>
<feature type="binding site" evidence="1">
    <location>
        <position position="100"/>
    </location>
    <ligand>
        <name>Zn(2+)</name>
        <dbReference type="ChEBI" id="CHEBI:29105"/>
    </ligand>
</feature>
<proteinExistence type="inferred from homology"/>
<keyword id="KW-0479">Metal-binding</keyword>
<keyword id="KW-0533">Nickel</keyword>
<keyword id="KW-0862">Zinc</keyword>
<reference key="1">
    <citation type="submission" date="2007-06" db="EMBL/GenBank/DDBJ databases">
        <title>Complete sequence of Methanococcus vannielii SB.</title>
        <authorList>
            <consortium name="US DOE Joint Genome Institute"/>
            <person name="Copeland A."/>
            <person name="Lucas S."/>
            <person name="Lapidus A."/>
            <person name="Barry K."/>
            <person name="Glavina del Rio T."/>
            <person name="Dalin E."/>
            <person name="Tice H."/>
            <person name="Pitluck S."/>
            <person name="Chain P."/>
            <person name="Malfatti S."/>
            <person name="Shin M."/>
            <person name="Vergez L."/>
            <person name="Schmutz J."/>
            <person name="Larimer F."/>
            <person name="Land M."/>
            <person name="Hauser L."/>
            <person name="Kyrpides N."/>
            <person name="Anderson I."/>
            <person name="Sieprawska-Lupa M."/>
            <person name="Whitman W.B."/>
            <person name="Richardson P."/>
        </authorList>
    </citation>
    <scope>NUCLEOTIDE SEQUENCE [LARGE SCALE GENOMIC DNA]</scope>
    <source>
        <strain>ATCC 35089 / DSM 1224 / JCM 13029 / OCM 148 / SB</strain>
    </source>
</reference>
<organism>
    <name type="scientific">Methanococcus vannielii (strain ATCC 35089 / DSM 1224 / JCM 13029 / OCM 148 / SB)</name>
    <dbReference type="NCBI Taxonomy" id="406327"/>
    <lineage>
        <taxon>Archaea</taxon>
        <taxon>Methanobacteriati</taxon>
        <taxon>Methanobacteriota</taxon>
        <taxon>Methanomada group</taxon>
        <taxon>Methanococci</taxon>
        <taxon>Methanococcales</taxon>
        <taxon>Methanococcaceae</taxon>
        <taxon>Methanococcus</taxon>
    </lineage>
</organism>
<protein>
    <recommendedName>
        <fullName evidence="1">Hydrogenase maturation factor HypA</fullName>
    </recommendedName>
</protein>
<evidence type="ECO:0000255" key="1">
    <source>
        <dbReference type="HAMAP-Rule" id="MF_00213"/>
    </source>
</evidence>
<comment type="function">
    <text evidence="1">Involved in the maturation of [NiFe] hydrogenases. Required for nickel insertion into the metal center of the hydrogenase.</text>
</comment>
<comment type="similarity">
    <text evidence="1">Belongs to the HypA/HybF family.</text>
</comment>
<dbReference type="EMBL" id="CP000742">
    <property type="protein sequence ID" value="ABR55209.1"/>
    <property type="molecule type" value="Genomic_DNA"/>
</dbReference>
<dbReference type="RefSeq" id="WP_012066124.1">
    <property type="nucleotide sequence ID" value="NC_009634.1"/>
</dbReference>
<dbReference type="SMR" id="A6URT7"/>
<dbReference type="STRING" id="406327.Mevan_1312"/>
<dbReference type="GeneID" id="5324868"/>
<dbReference type="KEGG" id="mvn:Mevan_1312"/>
<dbReference type="eggNOG" id="arCOG04426">
    <property type="taxonomic scope" value="Archaea"/>
</dbReference>
<dbReference type="HOGENOM" id="CLU_126929_2_1_2"/>
<dbReference type="OrthoDB" id="36835at2157"/>
<dbReference type="Proteomes" id="UP000001107">
    <property type="component" value="Chromosome"/>
</dbReference>
<dbReference type="GO" id="GO:0016151">
    <property type="term" value="F:nickel cation binding"/>
    <property type="evidence" value="ECO:0007669"/>
    <property type="project" value="UniProtKB-UniRule"/>
</dbReference>
<dbReference type="GO" id="GO:0008270">
    <property type="term" value="F:zinc ion binding"/>
    <property type="evidence" value="ECO:0007669"/>
    <property type="project" value="UniProtKB-UniRule"/>
</dbReference>
<dbReference type="GO" id="GO:0051604">
    <property type="term" value="P:protein maturation"/>
    <property type="evidence" value="ECO:0007669"/>
    <property type="project" value="InterPro"/>
</dbReference>
<dbReference type="GO" id="GO:0036211">
    <property type="term" value="P:protein modification process"/>
    <property type="evidence" value="ECO:0007669"/>
    <property type="project" value="UniProtKB-UniRule"/>
</dbReference>
<dbReference type="Gene3D" id="3.30.2320.80">
    <property type="match status" value="1"/>
</dbReference>
<dbReference type="HAMAP" id="MF_00213">
    <property type="entry name" value="HypA_HybF"/>
    <property type="match status" value="1"/>
</dbReference>
<dbReference type="InterPro" id="IPR000688">
    <property type="entry name" value="HypA/HybF"/>
</dbReference>
<dbReference type="NCBIfam" id="TIGR00100">
    <property type="entry name" value="hypA"/>
    <property type="match status" value="1"/>
</dbReference>
<dbReference type="PANTHER" id="PTHR34535">
    <property type="entry name" value="HYDROGENASE MATURATION FACTOR HYPA"/>
    <property type="match status" value="1"/>
</dbReference>
<dbReference type="PANTHER" id="PTHR34535:SF3">
    <property type="entry name" value="HYDROGENASE MATURATION FACTOR HYPA"/>
    <property type="match status" value="1"/>
</dbReference>
<dbReference type="Pfam" id="PF01155">
    <property type="entry name" value="HypA"/>
    <property type="match status" value="1"/>
</dbReference>
<dbReference type="PIRSF" id="PIRSF004761">
    <property type="entry name" value="Hydrgn_mat_HypA"/>
    <property type="match status" value="1"/>
</dbReference>
<sequence>MHELSYATSILNSILEVLKEQESLGKKVTGVSEINLEIGDLTLISFEQLKFAFEVIAENTLCKNAVLNTEMIKPKISCLNCGFLGILEVTDELEAKCPKCGSMNVRIKGGKEFNIKNAIIEFDD</sequence>
<gene>
    <name evidence="1" type="primary">hypA</name>
    <name type="ordered locus">Mevan_1312</name>
</gene>
<name>HYPA_METVS</name>
<accession>A6URT7</accession>